<gene>
    <name evidence="1" type="primary">trpA</name>
    <name type="ordered locus">MAP_1307</name>
</gene>
<dbReference type="EC" id="4.2.1.20" evidence="1"/>
<dbReference type="EMBL" id="AE016958">
    <property type="protein sequence ID" value="AAS03624.1"/>
    <property type="molecule type" value="Genomic_DNA"/>
</dbReference>
<dbReference type="RefSeq" id="WP_003877737.1">
    <property type="nucleotide sequence ID" value="NZ_CP106873.1"/>
</dbReference>
<dbReference type="SMR" id="Q740P2"/>
<dbReference type="STRING" id="262316.MAP_1307"/>
<dbReference type="KEGG" id="mpa:MAP_1307"/>
<dbReference type="PATRIC" id="fig|262316.17.peg.1376"/>
<dbReference type="eggNOG" id="COG0159">
    <property type="taxonomic scope" value="Bacteria"/>
</dbReference>
<dbReference type="HOGENOM" id="CLU_016734_0_0_11"/>
<dbReference type="UniPathway" id="UPA00035">
    <property type="reaction ID" value="UER00044"/>
</dbReference>
<dbReference type="Proteomes" id="UP000000580">
    <property type="component" value="Chromosome"/>
</dbReference>
<dbReference type="GO" id="GO:0005829">
    <property type="term" value="C:cytosol"/>
    <property type="evidence" value="ECO:0007669"/>
    <property type="project" value="TreeGrafter"/>
</dbReference>
<dbReference type="GO" id="GO:0004834">
    <property type="term" value="F:tryptophan synthase activity"/>
    <property type="evidence" value="ECO:0007669"/>
    <property type="project" value="UniProtKB-UniRule"/>
</dbReference>
<dbReference type="CDD" id="cd04724">
    <property type="entry name" value="Tryptophan_synthase_alpha"/>
    <property type="match status" value="1"/>
</dbReference>
<dbReference type="FunFam" id="3.20.20.70:FF:000037">
    <property type="entry name" value="Tryptophan synthase alpha chain"/>
    <property type="match status" value="1"/>
</dbReference>
<dbReference type="Gene3D" id="3.20.20.70">
    <property type="entry name" value="Aldolase class I"/>
    <property type="match status" value="1"/>
</dbReference>
<dbReference type="HAMAP" id="MF_00131">
    <property type="entry name" value="Trp_synth_alpha"/>
    <property type="match status" value="1"/>
</dbReference>
<dbReference type="InterPro" id="IPR013785">
    <property type="entry name" value="Aldolase_TIM"/>
</dbReference>
<dbReference type="InterPro" id="IPR011060">
    <property type="entry name" value="RibuloseP-bd_barrel"/>
</dbReference>
<dbReference type="InterPro" id="IPR018204">
    <property type="entry name" value="Trp_synthase_alpha_AS"/>
</dbReference>
<dbReference type="InterPro" id="IPR002028">
    <property type="entry name" value="Trp_synthase_suA"/>
</dbReference>
<dbReference type="NCBIfam" id="TIGR00262">
    <property type="entry name" value="trpA"/>
    <property type="match status" value="1"/>
</dbReference>
<dbReference type="PANTHER" id="PTHR43406:SF1">
    <property type="entry name" value="TRYPTOPHAN SYNTHASE ALPHA CHAIN, CHLOROPLASTIC"/>
    <property type="match status" value="1"/>
</dbReference>
<dbReference type="PANTHER" id="PTHR43406">
    <property type="entry name" value="TRYPTOPHAN SYNTHASE, ALPHA CHAIN"/>
    <property type="match status" value="1"/>
</dbReference>
<dbReference type="Pfam" id="PF00290">
    <property type="entry name" value="Trp_syntA"/>
    <property type="match status" value="1"/>
</dbReference>
<dbReference type="SUPFAM" id="SSF51366">
    <property type="entry name" value="Ribulose-phoshate binding barrel"/>
    <property type="match status" value="1"/>
</dbReference>
<dbReference type="PROSITE" id="PS00167">
    <property type="entry name" value="TRP_SYNTHASE_ALPHA"/>
    <property type="match status" value="1"/>
</dbReference>
<comment type="function">
    <text evidence="1">The alpha subunit is responsible for the aldol cleavage of indoleglycerol phosphate to indole and glyceraldehyde 3-phosphate.</text>
</comment>
<comment type="catalytic activity">
    <reaction evidence="1">
        <text>(1S,2R)-1-C-(indol-3-yl)glycerol 3-phosphate + L-serine = D-glyceraldehyde 3-phosphate + L-tryptophan + H2O</text>
        <dbReference type="Rhea" id="RHEA:10532"/>
        <dbReference type="ChEBI" id="CHEBI:15377"/>
        <dbReference type="ChEBI" id="CHEBI:33384"/>
        <dbReference type="ChEBI" id="CHEBI:57912"/>
        <dbReference type="ChEBI" id="CHEBI:58866"/>
        <dbReference type="ChEBI" id="CHEBI:59776"/>
        <dbReference type="EC" id="4.2.1.20"/>
    </reaction>
</comment>
<comment type="pathway">
    <text evidence="1">Amino-acid biosynthesis; L-tryptophan biosynthesis; L-tryptophan from chorismate: step 5/5.</text>
</comment>
<comment type="subunit">
    <text evidence="1">Tetramer of two alpha and two beta chains.</text>
</comment>
<comment type="similarity">
    <text evidence="1">Belongs to the TrpA family.</text>
</comment>
<reference key="1">
    <citation type="journal article" date="2005" name="Proc. Natl. Acad. Sci. U.S.A.">
        <title>The complete genome sequence of Mycobacterium avium subspecies paratuberculosis.</title>
        <authorList>
            <person name="Li L."/>
            <person name="Bannantine J.P."/>
            <person name="Zhang Q."/>
            <person name="Amonsin A."/>
            <person name="May B.J."/>
            <person name="Alt D."/>
            <person name="Banerji N."/>
            <person name="Kanjilal S."/>
            <person name="Kapur V."/>
        </authorList>
    </citation>
    <scope>NUCLEOTIDE SEQUENCE [LARGE SCALE GENOMIC DNA]</scope>
    <source>
        <strain>ATCC BAA-968 / K-10</strain>
    </source>
</reference>
<keyword id="KW-0028">Amino-acid biosynthesis</keyword>
<keyword id="KW-0057">Aromatic amino acid biosynthesis</keyword>
<keyword id="KW-0456">Lyase</keyword>
<keyword id="KW-1185">Reference proteome</keyword>
<keyword id="KW-0822">Tryptophan biosynthesis</keyword>
<sequence>MTVKQSQASRLSPIFEPCRDDDRAALIGYLPTGYPDVPTSVQAMVALVESGCDIVEVGVPYSDPGMDGPTIARATEAALHGGVRVRDTLAAVEAISAAGGRAVVMTYWNPVLRYGVDAFARDLAAAGGYGLITPDLIPDEAGQWLAASERHGLDRIFLVAPSSTPQRLALTVEASRGFVYAASTMGVTGARDAVSHAAPELVSRVREISDIPVGVGLGVRSREQAAQIGGYADGVIVGSALVSALGDGGLTALRALTEELAAGVRQRAAAS</sequence>
<organism>
    <name type="scientific">Mycolicibacterium paratuberculosis (strain ATCC BAA-968 / K-10)</name>
    <name type="common">Mycobacterium paratuberculosis</name>
    <dbReference type="NCBI Taxonomy" id="262316"/>
    <lineage>
        <taxon>Bacteria</taxon>
        <taxon>Bacillati</taxon>
        <taxon>Actinomycetota</taxon>
        <taxon>Actinomycetes</taxon>
        <taxon>Mycobacteriales</taxon>
        <taxon>Mycobacteriaceae</taxon>
        <taxon>Mycobacterium</taxon>
        <taxon>Mycobacterium avium complex (MAC)</taxon>
    </lineage>
</organism>
<proteinExistence type="inferred from homology"/>
<evidence type="ECO:0000255" key="1">
    <source>
        <dbReference type="HAMAP-Rule" id="MF_00131"/>
    </source>
</evidence>
<name>TRPA_MYCPA</name>
<accession>Q740P2</accession>
<feature type="chain" id="PRO_0000098810" description="Tryptophan synthase alpha chain">
    <location>
        <begin position="1"/>
        <end position="271"/>
    </location>
</feature>
<feature type="active site" description="Proton acceptor" evidence="1">
    <location>
        <position position="56"/>
    </location>
</feature>
<feature type="active site" description="Proton acceptor" evidence="1">
    <location>
        <position position="67"/>
    </location>
</feature>
<protein>
    <recommendedName>
        <fullName evidence="1">Tryptophan synthase alpha chain</fullName>
        <ecNumber evidence="1">4.2.1.20</ecNumber>
    </recommendedName>
</protein>